<comment type="function">
    <text evidence="5 6 7">Required for normal embryo development (PubMed:15266054, PubMed:18684657). Necessary to acquire heat stress (HS) memory, by modulating nucleosome occupancy and regulating heat-induced gene expression. Associates globally with the nucleosome-poor regions flanking the transcription units of expressed genes. Binds to the promoter regions, primarily to the proximal promoter just upstream of the transcriptional start sites (TSS) and somewhat more weakly to the region downstream of the transcription termination site (TTS), of actively expressed genes (e.g. HSA32, HSP18.2 and HSP22.0) in a heat-dependent fashion (PubMed:27680998).</text>
</comment>
<comment type="subunit">
    <text evidence="7">Interacts with SWI/SNF and ISWI chromatin remodelers such as BRM, CHR11 and CHR17. Binds to histone H3.</text>
</comment>
<comment type="interaction">
    <interactant intactId="EBI-15205608">
        <id>F4IF36</id>
    </interactant>
    <interactant intactId="EBI-15192251">
        <id>Q9FME3</id>
        <label>TCP5</label>
    </interactant>
    <organismsDiffer>false</organismsDiffer>
    <experiments>4</experiments>
</comment>
<comment type="subcellular location">
    <subcellularLocation>
        <location evidence="3 7">Nucleus</location>
    </subcellularLocation>
</comment>
<comment type="disruption phenotype">
    <text evidence="5 6 7">Abnormal embryo development leading to reduced cotyledons (PubMed:15266054, PubMed:18684657). Reduced maintenance of heat-induced (37 degrees Celsius) gene expression leading to reduced growth and survival in heat conditions (44 degrees Celsius). Abnormal nucleosome dynamics at loci with altered maintenance of heat-induced expression. The double mutant brm-1 fgt1-1 exhibits retarted seedling development resulting in reduced development and delayed leaf initiation, as well as delayed flowering time (PubMed:27680998).</text>
</comment>
<comment type="similarity">
    <text evidence="1">Belongs to the SBNO family.</text>
</comment>
<comment type="sequence caution" evidence="10">
    <conflict type="erroneous gene model prediction">
        <sequence resource="EMBL-CDS" id="AAC17076"/>
    </conflict>
</comment>
<sequence length="1295" mass="143617">MTQSPVQPPPPLPAQPHSAAGGVIRGDVQVRCAGCRVILRVKTGVVEFSCPTCQLPQMLPPELLSRARPQFPQSPQQPPQPIQTLPPPIQQQLKPLNLPRPPVPAHGIDPTKMQLPCANCQAILNVPHGLTRFSCPQCHVELAVDVSKLNRSLTASQSHSNPPTPAAPTVPPPPPPEEVNEEAIEVEREEDEGGTAGETFMDYRPPKLSIGPPHPDPIVETSSLSAVQPPEPTYDLKIKEELERSKALSCLQIETLVYACQRHLQHLADGTRAGFFVGDGAGVGKGRTIAGLIWENWKHGRRKALWISIGSDLKYDARRDLDDVGATCVGVNPLNKLPYSKLDSKNVGIKEGVVFLTYNSLIASSEKGRSRLQQLVQWCGPEFDGLLIFDECHKAKNLVPEAGSQPTRIGQAVVDIQDKIPQARVIYCSATGASEPRNMGYMVRLGLWGAGTSFSDFNKFLGALDKGGTGALELVAMDMKARGMYVCRTLSYKGAEFEIVEARLEAGMEAMYNKSAEFWAELRIELLSASAFLPNEKPNSSQLWRLYWSSHQRFFRHLCMSAKVPVTVRLAKKALSTNKCVVIGLQSTGEARTEEAVNKYGLELDDFVSGPRELLLKFVEENYPLPEQPEPLSEDDSVKELQRKRHSASPGVSIRGRVRKMAKWKPDSDNESDLESEADSADDSNDSDDEFQICQICSGEDERKKLLHCSECDKLFHPDCVVPPVIDLPSEAWICFSCKEKTEEYIQARRLYIAELQKRYEAALERKSKIIEIIRSLNLPNNPLDDIVDQLGGPEKVAEMTGRRGMLVRASNGKGVTYQARNTKDITMEMVNMHEKQLFMDGKKLVAIISEAGSAGVSLQADRRAVNQKRRVHLTLELPWSADRAIQQFGRTHRSNQTSAPEYRLLFTNLGGERRFASIVAKRLETLGALTQGDRRAGPSGPSLSAYNYDSNFGKKSLMVMYRGIMEQEKLPVLPPGCSIDEPETVKEFLTKARAALVAVGIVRDSVLANGKDVGRFSGRIIDSDMHDVGRFLNRLLGLPPDIQNRLFELFTSILDVLVHNARIEGSFDSGIVDMKANSVELLSTPKTVHVDQMSGASTMLFTFTLDRGVTWESASSMLEGKRRDGLGSANDGFFESKREWLGRRHFILAFESAASGLFKIVRPAVGESIREMSLSELKTKYRKLSSLEKARTGWEDEYEVSSKQCMHGPKCKLGEYCTVGRRIQEVNVVGGLILPIWGTIEKALSKQARHSHKRIRVIRIETTTDNQRIVGLSIPNAAVETVLQDLAWVQEIDD</sequence>
<name>FGT1_ARATH</name>
<feature type="chain" id="PRO_0000438548" description="Protein FORGETTER 1">
    <location>
        <begin position="1"/>
        <end position="1295"/>
    </location>
</feature>
<feature type="zinc finger region" description="PHD-type" evidence="2">
    <location>
        <begin position="691"/>
        <end position="741"/>
    </location>
</feature>
<feature type="region of interest" description="Disordered" evidence="4">
    <location>
        <begin position="1"/>
        <end position="20"/>
    </location>
</feature>
<feature type="region of interest" description="Disordered" evidence="4">
    <location>
        <begin position="68"/>
        <end position="107"/>
    </location>
</feature>
<feature type="region of interest" description="Disordered" evidence="4">
    <location>
        <begin position="153"/>
        <end position="204"/>
    </location>
</feature>
<feature type="region of interest" description="Disordered" evidence="4">
    <location>
        <begin position="626"/>
        <end position="688"/>
    </location>
</feature>
<feature type="short sequence motif" description="Nuclear localization signal" evidence="3">
    <location>
        <begin position="643"/>
        <end position="650"/>
    </location>
</feature>
<feature type="compositionally biased region" description="Pro residues" evidence="4">
    <location>
        <begin position="1"/>
        <end position="14"/>
    </location>
</feature>
<feature type="compositionally biased region" description="Pro residues" evidence="4">
    <location>
        <begin position="75"/>
        <end position="89"/>
    </location>
</feature>
<feature type="compositionally biased region" description="Pro residues" evidence="4">
    <location>
        <begin position="162"/>
        <end position="177"/>
    </location>
</feature>
<feature type="compositionally biased region" description="Acidic residues" evidence="4">
    <location>
        <begin position="178"/>
        <end position="193"/>
    </location>
</feature>
<feature type="compositionally biased region" description="Acidic residues" evidence="4">
    <location>
        <begin position="669"/>
        <end position="688"/>
    </location>
</feature>
<reference key="1">
    <citation type="journal article" date="2000" name="Nature">
        <title>Sequence and analysis of chromosome 1 of the plant Arabidopsis thaliana.</title>
        <authorList>
            <person name="Theologis A."/>
            <person name="Ecker J.R."/>
            <person name="Palm C.J."/>
            <person name="Federspiel N.A."/>
            <person name="Kaul S."/>
            <person name="White O."/>
            <person name="Alonso J."/>
            <person name="Altafi H."/>
            <person name="Araujo R."/>
            <person name="Bowman C.L."/>
            <person name="Brooks S.Y."/>
            <person name="Buehler E."/>
            <person name="Chan A."/>
            <person name="Chao Q."/>
            <person name="Chen H."/>
            <person name="Cheuk R.F."/>
            <person name="Chin C.W."/>
            <person name="Chung M.K."/>
            <person name="Conn L."/>
            <person name="Conway A.B."/>
            <person name="Conway A.R."/>
            <person name="Creasy T.H."/>
            <person name="Dewar K."/>
            <person name="Dunn P."/>
            <person name="Etgu P."/>
            <person name="Feldblyum T.V."/>
            <person name="Feng J.-D."/>
            <person name="Fong B."/>
            <person name="Fujii C.Y."/>
            <person name="Gill J.E."/>
            <person name="Goldsmith A.D."/>
            <person name="Haas B."/>
            <person name="Hansen N.F."/>
            <person name="Hughes B."/>
            <person name="Huizar L."/>
            <person name="Hunter J.L."/>
            <person name="Jenkins J."/>
            <person name="Johnson-Hopson C."/>
            <person name="Khan S."/>
            <person name="Khaykin E."/>
            <person name="Kim C.J."/>
            <person name="Koo H.L."/>
            <person name="Kremenetskaia I."/>
            <person name="Kurtz D.B."/>
            <person name="Kwan A."/>
            <person name="Lam B."/>
            <person name="Langin-Hooper S."/>
            <person name="Lee A."/>
            <person name="Lee J.M."/>
            <person name="Lenz C.A."/>
            <person name="Li J.H."/>
            <person name="Li Y.-P."/>
            <person name="Lin X."/>
            <person name="Liu S.X."/>
            <person name="Liu Z.A."/>
            <person name="Luros J.S."/>
            <person name="Maiti R."/>
            <person name="Marziali A."/>
            <person name="Militscher J."/>
            <person name="Miranda M."/>
            <person name="Nguyen M."/>
            <person name="Nierman W.C."/>
            <person name="Osborne B.I."/>
            <person name="Pai G."/>
            <person name="Peterson J."/>
            <person name="Pham P.K."/>
            <person name="Rizzo M."/>
            <person name="Rooney T."/>
            <person name="Rowley D."/>
            <person name="Sakano H."/>
            <person name="Salzberg S.L."/>
            <person name="Schwartz J.R."/>
            <person name="Shinn P."/>
            <person name="Southwick A.M."/>
            <person name="Sun H."/>
            <person name="Tallon L.J."/>
            <person name="Tambunga G."/>
            <person name="Toriumi M.J."/>
            <person name="Town C.D."/>
            <person name="Utterback T."/>
            <person name="Van Aken S."/>
            <person name="Vaysberg M."/>
            <person name="Vysotskaia V.S."/>
            <person name="Walker M."/>
            <person name="Wu D."/>
            <person name="Yu G."/>
            <person name="Fraser C.M."/>
            <person name="Venter J.C."/>
            <person name="Davis R.W."/>
        </authorList>
    </citation>
    <scope>NUCLEOTIDE SEQUENCE [LARGE SCALE GENOMIC DNA]</scope>
    <source>
        <strain>cv. Columbia</strain>
    </source>
</reference>
<reference key="2">
    <citation type="journal article" date="2017" name="Plant J.">
        <title>Araport11: a complete reannotation of the Arabidopsis thaliana reference genome.</title>
        <authorList>
            <person name="Cheng C.Y."/>
            <person name="Krishnakumar V."/>
            <person name="Chan A.P."/>
            <person name="Thibaud-Nissen F."/>
            <person name="Schobel S."/>
            <person name="Town C.D."/>
        </authorList>
    </citation>
    <scope>GENOME REANNOTATION</scope>
    <source>
        <strain>cv. Columbia</strain>
    </source>
</reference>
<reference key="3">
    <citation type="journal article" date="2004" name="Plant Physiol.">
        <title>Identification of genes required for embryo development in Arabidopsis.</title>
        <authorList>
            <person name="Tzafrir I."/>
            <person name="Pena-Muralla R."/>
            <person name="Dickerman A."/>
            <person name="Berg M."/>
            <person name="Rogers R."/>
            <person name="Hutchens S."/>
            <person name="Sweeney T.C."/>
            <person name="McElver J."/>
            <person name="Aux G."/>
            <person name="Patton D."/>
            <person name="Meinke D."/>
        </authorList>
    </citation>
    <scope>FUNCTION</scope>
    <scope>DISRUPTION PHENOTYPE</scope>
    <source>
        <strain>cv. Columbia</strain>
    </source>
</reference>
<reference key="4">
    <citation type="journal article" date="2008" name="Trends Plant Sci.">
        <title>Identifying essential genes in Arabidopsis thaliana.</title>
        <authorList>
            <person name="Meinke D."/>
            <person name="Muralla R."/>
            <person name="Sweeney C."/>
            <person name="Dickerman A."/>
        </authorList>
    </citation>
    <scope>FUNCTION</scope>
    <scope>DISRUPTION PHENOTYPE</scope>
</reference>
<reference key="5">
    <citation type="journal article" date="2009" name="Plant Physiol.">
        <title>Large-scale Arabidopsis phosphoproteome profiling reveals novel chloroplast kinase substrates and phosphorylation networks.</title>
        <authorList>
            <person name="Reiland S."/>
            <person name="Messerli G."/>
            <person name="Baerenfaller K."/>
            <person name="Gerrits B."/>
            <person name="Endler A."/>
            <person name="Grossmann J."/>
            <person name="Gruissem W."/>
            <person name="Baginsky S."/>
        </authorList>
    </citation>
    <scope>IDENTIFICATION BY MASS SPECTROMETRY [LARGE SCALE ANALYSIS]</scope>
</reference>
<reference key="6">
    <citation type="journal article" date="2016" name="Elife">
        <title>Arabidopsis FORGETTER1 mediates stress-induced chromatin memory through nucleosome remodeling.</title>
        <authorList>
            <person name="Brzezinka K."/>
            <person name="Altmann S."/>
            <person name="Czesnick H."/>
            <person name="Nicolas P."/>
            <person name="Gorka M."/>
            <person name="Benke E."/>
            <person name="Kabelitz T."/>
            <person name="Jaehne F."/>
            <person name="Graf A."/>
            <person name="Kappel C."/>
            <person name="Baeurle I."/>
        </authorList>
    </citation>
    <scope>FUNCTION</scope>
    <scope>DISRUPTION PHENOTYPE</scope>
    <scope>INTERACTION WITH BRM; CHR11 AND CHR17</scope>
    <scope>SUBCELLULAR LOCATION</scope>
    <scope>SUBUNIT</scope>
    <source>
        <strain>cv. Columbia</strain>
    </source>
</reference>
<evidence type="ECO:0000255" key="1"/>
<evidence type="ECO:0000255" key="2">
    <source>
        <dbReference type="PROSITE-ProRule" id="PRU00146"/>
    </source>
</evidence>
<evidence type="ECO:0000255" key="3">
    <source>
        <dbReference type="PROSITE-ProRule" id="PRU00768"/>
    </source>
</evidence>
<evidence type="ECO:0000256" key="4">
    <source>
        <dbReference type="SAM" id="MobiDB-lite"/>
    </source>
</evidence>
<evidence type="ECO:0000269" key="5">
    <source>
    </source>
</evidence>
<evidence type="ECO:0000269" key="6">
    <source>
    </source>
</evidence>
<evidence type="ECO:0000269" key="7">
    <source>
    </source>
</evidence>
<evidence type="ECO:0000303" key="8">
    <source>
    </source>
</evidence>
<evidence type="ECO:0000303" key="9">
    <source>
    </source>
</evidence>
<evidence type="ECO:0000305" key="10"/>
<evidence type="ECO:0000312" key="11">
    <source>
        <dbReference type="Araport" id="AT1G79350"/>
    </source>
</evidence>
<evidence type="ECO:0000312" key="12">
    <source>
        <dbReference type="EMBL" id="AAC17076.1"/>
    </source>
</evidence>
<protein>
    <recommendedName>
        <fullName evidence="9">Protein FORGETTER 1</fullName>
    </recommendedName>
    <alternativeName>
        <fullName evidence="8">Protein EMBRYO DEFECTIVE 1135</fullName>
    </alternativeName>
</protein>
<accession>F4IF36</accession>
<accession>O64516</accession>
<proteinExistence type="evidence at protein level"/>
<keyword id="KW-0217">Developmental protein</keyword>
<keyword id="KW-0479">Metal-binding</keyword>
<keyword id="KW-0539">Nucleus</keyword>
<keyword id="KW-1185">Reference proteome</keyword>
<keyword id="KW-0346">Stress response</keyword>
<keyword id="KW-0804">Transcription</keyword>
<keyword id="KW-0805">Transcription regulation</keyword>
<keyword id="KW-0862">Zinc</keyword>
<keyword id="KW-0863">Zinc-finger</keyword>
<dbReference type="EMBL" id="AC002986">
    <property type="protein sequence ID" value="AAC17076.1"/>
    <property type="status" value="ALT_SEQ"/>
    <property type="molecule type" value="Genomic_DNA"/>
</dbReference>
<dbReference type="EMBL" id="CP002684">
    <property type="protein sequence ID" value="AEE36233.1"/>
    <property type="molecule type" value="Genomic_DNA"/>
</dbReference>
<dbReference type="PIR" id="T01020">
    <property type="entry name" value="T01020"/>
</dbReference>
<dbReference type="RefSeq" id="NP_178053.4">
    <property type="nucleotide sequence ID" value="NM_106583.6"/>
</dbReference>
<dbReference type="FunCoup" id="F4IF36">
    <property type="interactions" value="3113"/>
</dbReference>
<dbReference type="IntAct" id="F4IF36">
    <property type="interactions" value="7"/>
</dbReference>
<dbReference type="STRING" id="3702.F4IF36"/>
<dbReference type="GlyGen" id="F4IF36">
    <property type="glycosylation" value="1 site"/>
</dbReference>
<dbReference type="iPTMnet" id="F4IF36"/>
<dbReference type="PaxDb" id="3702-AT1G79350.1"/>
<dbReference type="ProteomicsDB" id="230090"/>
<dbReference type="EnsemblPlants" id="AT1G79350.1">
    <property type="protein sequence ID" value="AT1G79350.1"/>
    <property type="gene ID" value="AT1G79350"/>
</dbReference>
<dbReference type="GeneID" id="844273"/>
<dbReference type="Gramene" id="AT1G79350.1">
    <property type="protein sequence ID" value="AT1G79350.1"/>
    <property type="gene ID" value="AT1G79350"/>
</dbReference>
<dbReference type="KEGG" id="ath:AT1G79350"/>
<dbReference type="Araport" id="AT1G79350"/>
<dbReference type="TAIR" id="AT1G79350">
    <property type="gene designation" value="EMB1135"/>
</dbReference>
<dbReference type="eggNOG" id="KOG1513">
    <property type="taxonomic scope" value="Eukaryota"/>
</dbReference>
<dbReference type="HOGENOM" id="CLU_000212_2_1_1"/>
<dbReference type="InParanoid" id="F4IF36"/>
<dbReference type="OMA" id="QPPEPIY"/>
<dbReference type="PRO" id="PR:F4IF36"/>
<dbReference type="Proteomes" id="UP000006548">
    <property type="component" value="Chromosome 1"/>
</dbReference>
<dbReference type="ExpressionAtlas" id="F4IF36">
    <property type="expression patterns" value="baseline and differential"/>
</dbReference>
<dbReference type="GO" id="GO:0005634">
    <property type="term" value="C:nucleus"/>
    <property type="evidence" value="ECO:0000314"/>
    <property type="project" value="UniProtKB"/>
</dbReference>
<dbReference type="GO" id="GO:0031490">
    <property type="term" value="F:chromatin DNA binding"/>
    <property type="evidence" value="ECO:0000314"/>
    <property type="project" value="TAIR"/>
</dbReference>
<dbReference type="GO" id="GO:0042393">
    <property type="term" value="F:histone binding"/>
    <property type="evidence" value="ECO:0000314"/>
    <property type="project" value="UniProtKB"/>
</dbReference>
<dbReference type="GO" id="GO:1990841">
    <property type="term" value="F:promoter-specific chromatin binding"/>
    <property type="evidence" value="ECO:0000314"/>
    <property type="project" value="UniProtKB"/>
</dbReference>
<dbReference type="GO" id="GO:0008270">
    <property type="term" value="F:zinc ion binding"/>
    <property type="evidence" value="ECO:0007669"/>
    <property type="project" value="UniProtKB-KW"/>
</dbReference>
<dbReference type="GO" id="GO:0006338">
    <property type="term" value="P:chromatin remodeling"/>
    <property type="evidence" value="ECO:0000315"/>
    <property type="project" value="GO_Central"/>
</dbReference>
<dbReference type="GO" id="GO:0040029">
    <property type="term" value="P:epigenetic regulation of gene expression"/>
    <property type="evidence" value="ECO:0000315"/>
    <property type="project" value="UniProtKB"/>
</dbReference>
<dbReference type="GO" id="GO:0010286">
    <property type="term" value="P:heat acclimation"/>
    <property type="evidence" value="ECO:0000315"/>
    <property type="project" value="TAIR"/>
</dbReference>
<dbReference type="GO" id="GO:1900036">
    <property type="term" value="P:positive regulation of cellular response to heat"/>
    <property type="evidence" value="ECO:0000315"/>
    <property type="project" value="UniProtKB"/>
</dbReference>
<dbReference type="GO" id="GO:0006355">
    <property type="term" value="P:regulation of DNA-templated transcription"/>
    <property type="evidence" value="ECO:0007669"/>
    <property type="project" value="InterPro"/>
</dbReference>
<dbReference type="GO" id="GO:0009408">
    <property type="term" value="P:response to heat"/>
    <property type="evidence" value="ECO:0000314"/>
    <property type="project" value="UniProtKB"/>
</dbReference>
<dbReference type="FunFam" id="3.40.50.300:FF:000342">
    <property type="entry name" value="Protein strawberry notch homolog 2"/>
    <property type="match status" value="1"/>
</dbReference>
<dbReference type="Gene3D" id="3.40.50.300">
    <property type="entry name" value="P-loop containing nucleotide triphosphate hydrolases"/>
    <property type="match status" value="1"/>
</dbReference>
<dbReference type="Gene3D" id="3.30.40.10">
    <property type="entry name" value="Zinc/RING finger domain, C3HC4 (zinc finger)"/>
    <property type="match status" value="1"/>
</dbReference>
<dbReference type="InterPro" id="IPR027417">
    <property type="entry name" value="P-loop_NTPase"/>
</dbReference>
<dbReference type="InterPro" id="IPR026937">
    <property type="entry name" value="SBNO_Helicase_C_dom"/>
</dbReference>
<dbReference type="InterPro" id="IPR026741">
    <property type="entry name" value="SNO"/>
</dbReference>
<dbReference type="InterPro" id="IPR039187">
    <property type="entry name" value="SNO_AAA"/>
</dbReference>
<dbReference type="InterPro" id="IPR019786">
    <property type="entry name" value="Zinc_finger_PHD-type_CS"/>
</dbReference>
<dbReference type="InterPro" id="IPR011011">
    <property type="entry name" value="Znf_FYVE_PHD"/>
</dbReference>
<dbReference type="InterPro" id="IPR001965">
    <property type="entry name" value="Znf_PHD"/>
</dbReference>
<dbReference type="InterPro" id="IPR019787">
    <property type="entry name" value="Znf_PHD-finger"/>
</dbReference>
<dbReference type="InterPro" id="IPR013083">
    <property type="entry name" value="Znf_RING/FYVE/PHD"/>
</dbReference>
<dbReference type="InterPro" id="IPR057024">
    <property type="entry name" value="Znr_FGT1_1"/>
</dbReference>
<dbReference type="InterPro" id="IPR057025">
    <property type="entry name" value="Znr_FGT1_2"/>
</dbReference>
<dbReference type="PANTHER" id="PTHR12706:SF13">
    <property type="entry name" value="PROTEIN FORGETTER 1"/>
    <property type="match status" value="1"/>
</dbReference>
<dbReference type="PANTHER" id="PTHR12706">
    <property type="entry name" value="STRAWBERRY NOTCH-RELATED"/>
    <property type="match status" value="1"/>
</dbReference>
<dbReference type="Pfam" id="PF13872">
    <property type="entry name" value="AAA_34"/>
    <property type="match status" value="1"/>
</dbReference>
<dbReference type="Pfam" id="PF13871">
    <property type="entry name" value="Helicase_C_4"/>
    <property type="match status" value="1"/>
</dbReference>
<dbReference type="Pfam" id="PF00628">
    <property type="entry name" value="PHD"/>
    <property type="match status" value="1"/>
</dbReference>
<dbReference type="Pfam" id="PF25373">
    <property type="entry name" value="SBNO"/>
    <property type="match status" value="1"/>
</dbReference>
<dbReference type="Pfam" id="PF23547">
    <property type="entry name" value="Zn_ribbon_FGT1_1"/>
    <property type="match status" value="1"/>
</dbReference>
<dbReference type="Pfam" id="PF23548">
    <property type="entry name" value="Zn_ribbon_FGT1_2"/>
    <property type="match status" value="1"/>
</dbReference>
<dbReference type="SMART" id="SM00249">
    <property type="entry name" value="PHD"/>
    <property type="match status" value="1"/>
</dbReference>
<dbReference type="SUPFAM" id="SSF57903">
    <property type="entry name" value="FYVE/PHD zinc finger"/>
    <property type="match status" value="1"/>
</dbReference>
<dbReference type="SUPFAM" id="SSF52540">
    <property type="entry name" value="P-loop containing nucleoside triphosphate hydrolases"/>
    <property type="match status" value="2"/>
</dbReference>
<dbReference type="PROSITE" id="PS01359">
    <property type="entry name" value="ZF_PHD_1"/>
    <property type="match status" value="1"/>
</dbReference>
<dbReference type="PROSITE" id="PS50016">
    <property type="entry name" value="ZF_PHD_2"/>
    <property type="match status" value="1"/>
</dbReference>
<organism>
    <name type="scientific">Arabidopsis thaliana</name>
    <name type="common">Mouse-ear cress</name>
    <dbReference type="NCBI Taxonomy" id="3702"/>
    <lineage>
        <taxon>Eukaryota</taxon>
        <taxon>Viridiplantae</taxon>
        <taxon>Streptophyta</taxon>
        <taxon>Embryophyta</taxon>
        <taxon>Tracheophyta</taxon>
        <taxon>Spermatophyta</taxon>
        <taxon>Magnoliopsida</taxon>
        <taxon>eudicotyledons</taxon>
        <taxon>Gunneridae</taxon>
        <taxon>Pentapetalae</taxon>
        <taxon>rosids</taxon>
        <taxon>malvids</taxon>
        <taxon>Brassicales</taxon>
        <taxon>Brassicaceae</taxon>
        <taxon>Camelineae</taxon>
        <taxon>Arabidopsis</taxon>
    </lineage>
</organism>
<gene>
    <name evidence="9" type="primary">FGT1</name>
    <name evidence="8" type="synonym">EMB1135</name>
    <name evidence="11" type="ordered locus">At1g79350</name>
    <name evidence="12" type="ORF">YUP8H12R.3</name>
</gene>